<feature type="chain" id="PRO_0000195335" description="Glucose-1-phosphate adenylyltransferase">
    <location>
        <begin position="1"/>
        <end position="380"/>
    </location>
</feature>
<feature type="binding site" evidence="1">
    <location>
        <position position="164"/>
    </location>
    <ligand>
        <name>alpha-D-glucose 1-phosphate</name>
        <dbReference type="ChEBI" id="CHEBI:58601"/>
    </ligand>
</feature>
<feature type="binding site" evidence="1">
    <location>
        <begin position="179"/>
        <end position="180"/>
    </location>
    <ligand>
        <name>alpha-D-glucose 1-phosphate</name>
        <dbReference type="ChEBI" id="CHEBI:58601"/>
    </ligand>
</feature>
<feature type="binding site" evidence="1">
    <location>
        <position position="190"/>
    </location>
    <ligand>
        <name>alpha-D-glucose 1-phosphate</name>
        <dbReference type="ChEBI" id="CHEBI:58601"/>
    </ligand>
</feature>
<reference key="1">
    <citation type="journal article" date="2001" name="Science">
        <title>Complete genome sequence of a virulent isolate of Streptococcus pneumoniae.</title>
        <authorList>
            <person name="Tettelin H."/>
            <person name="Nelson K.E."/>
            <person name="Paulsen I.T."/>
            <person name="Eisen J.A."/>
            <person name="Read T.D."/>
            <person name="Peterson S.N."/>
            <person name="Heidelberg J.F."/>
            <person name="DeBoy R.T."/>
            <person name="Haft D.H."/>
            <person name="Dodson R.J."/>
            <person name="Durkin A.S."/>
            <person name="Gwinn M.L."/>
            <person name="Kolonay J.F."/>
            <person name="Nelson W.C."/>
            <person name="Peterson J.D."/>
            <person name="Umayam L.A."/>
            <person name="White O."/>
            <person name="Salzberg S.L."/>
            <person name="Lewis M.R."/>
            <person name="Radune D."/>
            <person name="Holtzapple E.K."/>
            <person name="Khouri H.M."/>
            <person name="Wolf A.M."/>
            <person name="Utterback T.R."/>
            <person name="Hansen C.L."/>
            <person name="McDonald L.A."/>
            <person name="Feldblyum T.V."/>
            <person name="Angiuoli S.V."/>
            <person name="Dickinson T."/>
            <person name="Hickey E.K."/>
            <person name="Holt I.E."/>
            <person name="Loftus B.J."/>
            <person name="Yang F."/>
            <person name="Smith H.O."/>
            <person name="Venter J.C."/>
            <person name="Dougherty B.A."/>
            <person name="Morrison D.A."/>
            <person name="Hollingshead S.K."/>
            <person name="Fraser C.M."/>
        </authorList>
    </citation>
    <scope>NUCLEOTIDE SEQUENCE [LARGE SCALE GENOMIC DNA]</scope>
    <source>
        <strain>ATCC BAA-334 / TIGR4</strain>
    </source>
</reference>
<name>GLGC_STRPN</name>
<proteinExistence type="inferred from homology"/>
<evidence type="ECO:0000255" key="1">
    <source>
        <dbReference type="HAMAP-Rule" id="MF_00624"/>
    </source>
</evidence>
<dbReference type="EC" id="2.7.7.27" evidence="1"/>
<dbReference type="EMBL" id="AE005672">
    <property type="protein sequence ID" value="AAK75233.1"/>
    <property type="molecule type" value="Genomic_DNA"/>
</dbReference>
<dbReference type="PIR" id="H95129">
    <property type="entry name" value="H95129"/>
</dbReference>
<dbReference type="RefSeq" id="WP_000787276.1">
    <property type="nucleotide sequence ID" value="NZ_CP155539.1"/>
</dbReference>
<dbReference type="SMR" id="Q97QS7"/>
<dbReference type="PaxDb" id="170187-SP_1122"/>
<dbReference type="EnsemblBacteria" id="AAK75233">
    <property type="protein sequence ID" value="AAK75233"/>
    <property type="gene ID" value="SP_1122"/>
</dbReference>
<dbReference type="KEGG" id="spn:SP_1122"/>
<dbReference type="eggNOG" id="COG0448">
    <property type="taxonomic scope" value="Bacteria"/>
</dbReference>
<dbReference type="PhylomeDB" id="Q97QS7"/>
<dbReference type="BioCyc" id="SPNE170187:G1FZB-1146-MONOMER"/>
<dbReference type="UniPathway" id="UPA00164"/>
<dbReference type="Proteomes" id="UP000000585">
    <property type="component" value="Chromosome"/>
</dbReference>
<dbReference type="GO" id="GO:0005524">
    <property type="term" value="F:ATP binding"/>
    <property type="evidence" value="ECO:0007669"/>
    <property type="project" value="UniProtKB-KW"/>
</dbReference>
<dbReference type="GO" id="GO:0008878">
    <property type="term" value="F:glucose-1-phosphate adenylyltransferase activity"/>
    <property type="evidence" value="ECO:0007669"/>
    <property type="project" value="UniProtKB-UniRule"/>
</dbReference>
<dbReference type="GO" id="GO:0005978">
    <property type="term" value="P:glycogen biosynthetic process"/>
    <property type="evidence" value="ECO:0007669"/>
    <property type="project" value="UniProtKB-UniRule"/>
</dbReference>
<dbReference type="CDD" id="cd02508">
    <property type="entry name" value="ADP_Glucose_PP"/>
    <property type="match status" value="1"/>
</dbReference>
<dbReference type="CDD" id="cd04651">
    <property type="entry name" value="LbH_G1P_AT_C"/>
    <property type="match status" value="1"/>
</dbReference>
<dbReference type="Gene3D" id="2.160.10.10">
    <property type="entry name" value="Hexapeptide repeat proteins"/>
    <property type="match status" value="1"/>
</dbReference>
<dbReference type="Gene3D" id="3.90.550.10">
    <property type="entry name" value="Spore Coat Polysaccharide Biosynthesis Protein SpsA, Chain A"/>
    <property type="match status" value="1"/>
</dbReference>
<dbReference type="HAMAP" id="MF_00624">
    <property type="entry name" value="GlgC"/>
    <property type="match status" value="1"/>
</dbReference>
<dbReference type="InterPro" id="IPR011831">
    <property type="entry name" value="ADP-Glc_PPase"/>
</dbReference>
<dbReference type="InterPro" id="IPR005836">
    <property type="entry name" value="ADP_Glu_pyroP_CS"/>
</dbReference>
<dbReference type="InterPro" id="IPR023049">
    <property type="entry name" value="GlgC_bac"/>
</dbReference>
<dbReference type="InterPro" id="IPR056818">
    <property type="entry name" value="GlmU/GlgC-like_hexapep"/>
</dbReference>
<dbReference type="InterPro" id="IPR005835">
    <property type="entry name" value="NTP_transferase_dom"/>
</dbReference>
<dbReference type="InterPro" id="IPR029044">
    <property type="entry name" value="Nucleotide-diphossugar_trans"/>
</dbReference>
<dbReference type="InterPro" id="IPR011004">
    <property type="entry name" value="Trimer_LpxA-like_sf"/>
</dbReference>
<dbReference type="NCBIfam" id="TIGR02091">
    <property type="entry name" value="glgC"/>
    <property type="match status" value="1"/>
</dbReference>
<dbReference type="NCBIfam" id="NF003670">
    <property type="entry name" value="PRK05293.1"/>
    <property type="match status" value="1"/>
</dbReference>
<dbReference type="PANTHER" id="PTHR43523:SF2">
    <property type="entry name" value="GLUCOSE-1-PHOSPHATE ADENYLYLTRANSFERASE"/>
    <property type="match status" value="1"/>
</dbReference>
<dbReference type="PANTHER" id="PTHR43523">
    <property type="entry name" value="GLUCOSE-1-PHOSPHATE ADENYLYLTRANSFERASE-RELATED"/>
    <property type="match status" value="1"/>
</dbReference>
<dbReference type="Pfam" id="PF24894">
    <property type="entry name" value="Hexapep_GlmU"/>
    <property type="match status" value="1"/>
</dbReference>
<dbReference type="Pfam" id="PF00483">
    <property type="entry name" value="NTP_transferase"/>
    <property type="match status" value="1"/>
</dbReference>
<dbReference type="SUPFAM" id="SSF53448">
    <property type="entry name" value="Nucleotide-diphospho-sugar transferases"/>
    <property type="match status" value="1"/>
</dbReference>
<dbReference type="SUPFAM" id="SSF51161">
    <property type="entry name" value="Trimeric LpxA-like enzymes"/>
    <property type="match status" value="1"/>
</dbReference>
<dbReference type="PROSITE" id="PS00808">
    <property type="entry name" value="ADP_GLC_PYROPHOSPH_1"/>
    <property type="match status" value="1"/>
</dbReference>
<dbReference type="PROSITE" id="PS00809">
    <property type="entry name" value="ADP_GLC_PYROPHOSPH_2"/>
    <property type="match status" value="1"/>
</dbReference>
<dbReference type="PROSITE" id="PS00810">
    <property type="entry name" value="ADP_GLC_PYROPHOSPH_3"/>
    <property type="match status" value="1"/>
</dbReference>
<sequence>MKNEMLALILAGGQGTRLGKLTQSIAKPAVQFGGRYRIIDFALSNCANSGIHNVGVVTQYQPLALNNHIGNGSSWGLDGINSGVSILQPYSASEGNRWFEGTSHAIYQNIDYIDSVNPEYVLILSGDHIYKMDYDDMLQSHKDNNASLTVAVLDVPLKEASRFGIMNTDANNRIVEFEEKPAQPKSTKASMGIYIFDWQRLRNMLVAAEKSKVGMSDFGKNVIPNYLESGESVYAYEFSGYWKDVGTIESLWEANMEYISPENALDSRNRQWKIYSRNLISPPNFLGANAHVEDSLVVDGCFVDGTVKHSILSTGAQVREGAEVLDSVIMSGAIIGQGAKIKRAIIGEGAIISDGVEIDGTDEVQVVGYNEVVGVATDED</sequence>
<accession>Q97QS7</accession>
<comment type="function">
    <text evidence="1">Involved in the biosynthesis of ADP-glucose, a building block required for the elongation reactions to produce glycogen. Catalyzes the reaction between ATP and alpha-D-glucose 1-phosphate (G1P) to produce pyrophosphate and ADP-Glc.</text>
</comment>
<comment type="catalytic activity">
    <reaction evidence="1">
        <text>alpha-D-glucose 1-phosphate + ATP + H(+) = ADP-alpha-D-glucose + diphosphate</text>
        <dbReference type="Rhea" id="RHEA:12120"/>
        <dbReference type="ChEBI" id="CHEBI:15378"/>
        <dbReference type="ChEBI" id="CHEBI:30616"/>
        <dbReference type="ChEBI" id="CHEBI:33019"/>
        <dbReference type="ChEBI" id="CHEBI:57498"/>
        <dbReference type="ChEBI" id="CHEBI:58601"/>
        <dbReference type="EC" id="2.7.7.27"/>
    </reaction>
</comment>
<comment type="pathway">
    <text evidence="1">Glycan biosynthesis; glycogen biosynthesis.</text>
</comment>
<comment type="subunit">
    <text evidence="1">Homotetramer.</text>
</comment>
<comment type="similarity">
    <text evidence="1">Belongs to the bacterial/plant glucose-1-phosphate adenylyltransferase family.</text>
</comment>
<keyword id="KW-0067">ATP-binding</keyword>
<keyword id="KW-0119">Carbohydrate metabolism</keyword>
<keyword id="KW-0320">Glycogen biosynthesis</keyword>
<keyword id="KW-0321">Glycogen metabolism</keyword>
<keyword id="KW-0547">Nucleotide-binding</keyword>
<keyword id="KW-0548">Nucleotidyltransferase</keyword>
<keyword id="KW-1185">Reference proteome</keyword>
<keyword id="KW-0808">Transferase</keyword>
<protein>
    <recommendedName>
        <fullName evidence="1">Glucose-1-phosphate adenylyltransferase</fullName>
        <ecNumber evidence="1">2.7.7.27</ecNumber>
    </recommendedName>
    <alternativeName>
        <fullName evidence="1">ADP-glucose pyrophosphorylase</fullName>
        <shortName evidence="1">ADPGlc PPase</shortName>
    </alternativeName>
    <alternativeName>
        <fullName evidence="1">ADP-glucose synthase</fullName>
    </alternativeName>
</protein>
<gene>
    <name evidence="1" type="primary">glgC</name>
    <name type="ordered locus">SP_1122</name>
</gene>
<organism>
    <name type="scientific">Streptococcus pneumoniae serotype 4 (strain ATCC BAA-334 / TIGR4)</name>
    <dbReference type="NCBI Taxonomy" id="170187"/>
    <lineage>
        <taxon>Bacteria</taxon>
        <taxon>Bacillati</taxon>
        <taxon>Bacillota</taxon>
        <taxon>Bacilli</taxon>
        <taxon>Lactobacillales</taxon>
        <taxon>Streptococcaceae</taxon>
        <taxon>Streptococcus</taxon>
    </lineage>
</organism>